<protein>
    <recommendedName>
        <fullName evidence="1">Argininosuccinate synthase</fullName>
        <ecNumber evidence="1">6.3.4.5</ecNumber>
    </recommendedName>
    <alternativeName>
        <fullName evidence="1">Citrulline--aspartate ligase</fullName>
    </alternativeName>
</protein>
<comment type="catalytic activity">
    <reaction evidence="1">
        <text>L-citrulline + L-aspartate + ATP = 2-(N(omega)-L-arginino)succinate + AMP + diphosphate + H(+)</text>
        <dbReference type="Rhea" id="RHEA:10932"/>
        <dbReference type="ChEBI" id="CHEBI:15378"/>
        <dbReference type="ChEBI" id="CHEBI:29991"/>
        <dbReference type="ChEBI" id="CHEBI:30616"/>
        <dbReference type="ChEBI" id="CHEBI:33019"/>
        <dbReference type="ChEBI" id="CHEBI:57472"/>
        <dbReference type="ChEBI" id="CHEBI:57743"/>
        <dbReference type="ChEBI" id="CHEBI:456215"/>
        <dbReference type="EC" id="6.3.4.5"/>
    </reaction>
</comment>
<comment type="pathway">
    <text evidence="1">Amino-acid biosynthesis; L-arginine biosynthesis; L-arginine from L-ornithine and carbamoyl phosphate: step 2/3.</text>
</comment>
<comment type="subunit">
    <text evidence="1">Homotetramer.</text>
</comment>
<comment type="subcellular location">
    <subcellularLocation>
        <location evidence="1">Cytoplasm</location>
    </subcellularLocation>
</comment>
<comment type="similarity">
    <text evidence="1">Belongs to the argininosuccinate synthase family. Type 1 subfamily.</text>
</comment>
<reference key="1">
    <citation type="submission" date="2005-03" db="EMBL/GenBank/DDBJ databases">
        <title>Comparison of the complete genome sequences of Rhodococcus erythropolis PR4 and Rhodococcus opacus B4.</title>
        <authorList>
            <person name="Takarada H."/>
            <person name="Sekine M."/>
            <person name="Hosoyama A."/>
            <person name="Yamada R."/>
            <person name="Fujisawa T."/>
            <person name="Omata S."/>
            <person name="Shimizu A."/>
            <person name="Tsukatani N."/>
            <person name="Tanikawa S."/>
            <person name="Fujita N."/>
            <person name="Harayama S."/>
        </authorList>
    </citation>
    <scope>NUCLEOTIDE SEQUENCE [LARGE SCALE GENOMIC DNA]</scope>
    <source>
        <strain>PR4 / NBRC 100887</strain>
    </source>
</reference>
<proteinExistence type="inferred from homology"/>
<name>ASSY_RHOE4</name>
<dbReference type="EC" id="6.3.4.5" evidence="1"/>
<dbReference type="EMBL" id="AP008957">
    <property type="protein sequence ID" value="BAH33986.1"/>
    <property type="molecule type" value="Genomic_DNA"/>
</dbReference>
<dbReference type="RefSeq" id="WP_007736221.1">
    <property type="nucleotide sequence ID" value="NC_012490.1"/>
</dbReference>
<dbReference type="SMR" id="C1A051"/>
<dbReference type="KEGG" id="rer:RER_32780"/>
<dbReference type="eggNOG" id="COG0137">
    <property type="taxonomic scope" value="Bacteria"/>
</dbReference>
<dbReference type="HOGENOM" id="CLU_032784_4_2_11"/>
<dbReference type="UniPathway" id="UPA00068">
    <property type="reaction ID" value="UER00113"/>
</dbReference>
<dbReference type="Proteomes" id="UP000002204">
    <property type="component" value="Chromosome"/>
</dbReference>
<dbReference type="GO" id="GO:0005737">
    <property type="term" value="C:cytoplasm"/>
    <property type="evidence" value="ECO:0007669"/>
    <property type="project" value="UniProtKB-SubCell"/>
</dbReference>
<dbReference type="GO" id="GO:0004055">
    <property type="term" value="F:argininosuccinate synthase activity"/>
    <property type="evidence" value="ECO:0007669"/>
    <property type="project" value="UniProtKB-UniRule"/>
</dbReference>
<dbReference type="GO" id="GO:0005524">
    <property type="term" value="F:ATP binding"/>
    <property type="evidence" value="ECO:0007669"/>
    <property type="project" value="UniProtKB-UniRule"/>
</dbReference>
<dbReference type="GO" id="GO:0000053">
    <property type="term" value="P:argininosuccinate metabolic process"/>
    <property type="evidence" value="ECO:0007669"/>
    <property type="project" value="TreeGrafter"/>
</dbReference>
<dbReference type="GO" id="GO:0006526">
    <property type="term" value="P:L-arginine biosynthetic process"/>
    <property type="evidence" value="ECO:0007669"/>
    <property type="project" value="UniProtKB-UniRule"/>
</dbReference>
<dbReference type="GO" id="GO:0000050">
    <property type="term" value="P:urea cycle"/>
    <property type="evidence" value="ECO:0007669"/>
    <property type="project" value="TreeGrafter"/>
</dbReference>
<dbReference type="CDD" id="cd01999">
    <property type="entry name" value="ASS"/>
    <property type="match status" value="1"/>
</dbReference>
<dbReference type="FunFam" id="3.40.50.620:FF:000038">
    <property type="entry name" value="Argininosuccinate synthase"/>
    <property type="match status" value="1"/>
</dbReference>
<dbReference type="FunFam" id="3.90.1260.10:FF:000007">
    <property type="entry name" value="Argininosuccinate synthase"/>
    <property type="match status" value="1"/>
</dbReference>
<dbReference type="Gene3D" id="3.90.1260.10">
    <property type="entry name" value="Argininosuccinate synthetase, chain A, domain 2"/>
    <property type="match status" value="1"/>
</dbReference>
<dbReference type="Gene3D" id="3.40.50.620">
    <property type="entry name" value="HUPs"/>
    <property type="match status" value="1"/>
</dbReference>
<dbReference type="Gene3D" id="1.20.5.470">
    <property type="entry name" value="Single helix bin"/>
    <property type="match status" value="1"/>
</dbReference>
<dbReference type="HAMAP" id="MF_00005">
    <property type="entry name" value="Arg_succ_synth_type1"/>
    <property type="match status" value="1"/>
</dbReference>
<dbReference type="InterPro" id="IPR048268">
    <property type="entry name" value="Arginosuc_syn_C"/>
</dbReference>
<dbReference type="InterPro" id="IPR048267">
    <property type="entry name" value="Arginosuc_syn_N"/>
</dbReference>
<dbReference type="InterPro" id="IPR001518">
    <property type="entry name" value="Arginosuc_synth"/>
</dbReference>
<dbReference type="InterPro" id="IPR018223">
    <property type="entry name" value="Arginosuc_synth_CS"/>
</dbReference>
<dbReference type="InterPro" id="IPR023434">
    <property type="entry name" value="Arginosuc_synth_type_1_subfam"/>
</dbReference>
<dbReference type="InterPro" id="IPR024074">
    <property type="entry name" value="AS_cat/multimer_dom_body"/>
</dbReference>
<dbReference type="InterPro" id="IPR014729">
    <property type="entry name" value="Rossmann-like_a/b/a_fold"/>
</dbReference>
<dbReference type="NCBIfam" id="TIGR00032">
    <property type="entry name" value="argG"/>
    <property type="match status" value="1"/>
</dbReference>
<dbReference type="NCBIfam" id="NF001770">
    <property type="entry name" value="PRK00509.1"/>
    <property type="match status" value="1"/>
</dbReference>
<dbReference type="PANTHER" id="PTHR11587">
    <property type="entry name" value="ARGININOSUCCINATE SYNTHASE"/>
    <property type="match status" value="1"/>
</dbReference>
<dbReference type="PANTHER" id="PTHR11587:SF2">
    <property type="entry name" value="ARGININOSUCCINATE SYNTHASE"/>
    <property type="match status" value="1"/>
</dbReference>
<dbReference type="Pfam" id="PF20979">
    <property type="entry name" value="Arginosuc_syn_C"/>
    <property type="match status" value="1"/>
</dbReference>
<dbReference type="Pfam" id="PF00764">
    <property type="entry name" value="Arginosuc_synth"/>
    <property type="match status" value="1"/>
</dbReference>
<dbReference type="SUPFAM" id="SSF52402">
    <property type="entry name" value="Adenine nucleotide alpha hydrolases-like"/>
    <property type="match status" value="1"/>
</dbReference>
<dbReference type="SUPFAM" id="SSF69864">
    <property type="entry name" value="Argininosuccinate synthetase, C-terminal domain"/>
    <property type="match status" value="1"/>
</dbReference>
<dbReference type="PROSITE" id="PS00564">
    <property type="entry name" value="ARGININOSUCCIN_SYN_1"/>
    <property type="match status" value="1"/>
</dbReference>
<dbReference type="PROSITE" id="PS00565">
    <property type="entry name" value="ARGININOSUCCIN_SYN_2"/>
    <property type="match status" value="1"/>
</dbReference>
<evidence type="ECO:0000255" key="1">
    <source>
        <dbReference type="HAMAP-Rule" id="MF_00005"/>
    </source>
</evidence>
<keyword id="KW-0028">Amino-acid biosynthesis</keyword>
<keyword id="KW-0055">Arginine biosynthesis</keyword>
<keyword id="KW-0067">ATP-binding</keyword>
<keyword id="KW-0963">Cytoplasm</keyword>
<keyword id="KW-0436">Ligase</keyword>
<keyword id="KW-0547">Nucleotide-binding</keyword>
<organism>
    <name type="scientific">Rhodococcus erythropolis (strain PR4 / NBRC 100887)</name>
    <dbReference type="NCBI Taxonomy" id="234621"/>
    <lineage>
        <taxon>Bacteria</taxon>
        <taxon>Bacillati</taxon>
        <taxon>Actinomycetota</taxon>
        <taxon>Actinomycetes</taxon>
        <taxon>Mycobacteriales</taxon>
        <taxon>Nocardiaceae</taxon>
        <taxon>Rhodococcus</taxon>
        <taxon>Rhodococcus erythropolis group</taxon>
    </lineage>
</organism>
<feature type="chain" id="PRO_1000201689" description="Argininosuccinate synthase">
    <location>
        <begin position="1"/>
        <end position="399"/>
    </location>
</feature>
<feature type="binding site" evidence="1">
    <location>
        <begin position="8"/>
        <end position="16"/>
    </location>
    <ligand>
        <name>ATP</name>
        <dbReference type="ChEBI" id="CHEBI:30616"/>
    </ligand>
</feature>
<feature type="binding site" evidence="1">
    <location>
        <position position="87"/>
    </location>
    <ligand>
        <name>L-citrulline</name>
        <dbReference type="ChEBI" id="CHEBI:57743"/>
    </ligand>
</feature>
<feature type="binding site" evidence="1">
    <location>
        <position position="117"/>
    </location>
    <ligand>
        <name>ATP</name>
        <dbReference type="ChEBI" id="CHEBI:30616"/>
    </ligand>
</feature>
<feature type="binding site" evidence="1">
    <location>
        <position position="119"/>
    </location>
    <ligand>
        <name>L-aspartate</name>
        <dbReference type="ChEBI" id="CHEBI:29991"/>
    </ligand>
</feature>
<feature type="binding site" evidence="1">
    <location>
        <position position="123"/>
    </location>
    <ligand>
        <name>L-aspartate</name>
        <dbReference type="ChEBI" id="CHEBI:29991"/>
    </ligand>
</feature>
<feature type="binding site" evidence="1">
    <location>
        <position position="123"/>
    </location>
    <ligand>
        <name>L-citrulline</name>
        <dbReference type="ChEBI" id="CHEBI:57743"/>
    </ligand>
</feature>
<feature type="binding site" evidence="1">
    <location>
        <position position="124"/>
    </location>
    <ligand>
        <name>L-aspartate</name>
        <dbReference type="ChEBI" id="CHEBI:29991"/>
    </ligand>
</feature>
<feature type="binding site" evidence="1">
    <location>
        <position position="127"/>
    </location>
    <ligand>
        <name>L-citrulline</name>
        <dbReference type="ChEBI" id="CHEBI:57743"/>
    </ligand>
</feature>
<feature type="binding site" evidence="1">
    <location>
        <position position="175"/>
    </location>
    <ligand>
        <name>L-citrulline</name>
        <dbReference type="ChEBI" id="CHEBI:57743"/>
    </ligand>
</feature>
<feature type="binding site" evidence="1">
    <location>
        <position position="260"/>
    </location>
    <ligand>
        <name>L-citrulline</name>
        <dbReference type="ChEBI" id="CHEBI:57743"/>
    </ligand>
</feature>
<feature type="binding site" evidence="1">
    <location>
        <position position="272"/>
    </location>
    <ligand>
        <name>L-citrulline</name>
        <dbReference type="ChEBI" id="CHEBI:57743"/>
    </ligand>
</feature>
<accession>C1A051</accession>
<sequence>MADRVVLAYSGGLDTSVAISWIGKETGAEVVAVAIDLGQGGEDMEVVRQRAIDCGAVESVVVDARDEFADEYCLPTIAANALYMDRYPLVSAISRPLIVKHIVEAARSHGGTIVSHGCTGKGNDQVRFEVGFGALAPDLQVIAPVRDYAWTREKAIAFAEENNIPINVSKKSPFSIDQNVWGRAVETGFLEDLWNAPTKDVYDYTQDPTVNWNAPDELIISFDKGRPVAIDGRPVSVLEAIQELNKRAGAQGVGRLDVVEDRLVGIKSREIYEAPGAMVLITAHQELEHVTLERELGRYKRQMEQRWSELVYDGLWFSPLKDALDTFVNKTQERVTGDIRLFLHGGAITVNGRRSPESLYDFNLATYDEGDSFDQSASKGFVEIHGLSSKVAAKRDLGL</sequence>
<gene>
    <name evidence="1" type="primary">argG</name>
    <name type="ordered locus">RER_32780</name>
</gene>